<accession>Q9S157</accession>
<evidence type="ECO:0000250" key="1"/>
<evidence type="ECO:0000269" key="2">
    <source>
    </source>
</evidence>
<evidence type="ECO:0000305" key="3"/>
<comment type="function">
    <text evidence="2">Catalyzes the non-heme iron(II)-dependent oxidative cleavage of 2,3-dihydroxyphenylpropionic acid and 2,3-dihydroxicinnamic acid into 2-hydroxy-6-ketononadienedioate and 2-hydroxy-6-ketononatrienedioate, respectively.</text>
</comment>
<comment type="catalytic activity">
    <reaction>
        <text>3-(2,3-dihydroxyphenyl)propanoate + O2 = (2Z,4E)-2-hydroxy-6-oxonona-2,4-dienedioate + H(+)</text>
        <dbReference type="Rhea" id="RHEA:23840"/>
        <dbReference type="ChEBI" id="CHEBI:15378"/>
        <dbReference type="ChEBI" id="CHEBI:15379"/>
        <dbReference type="ChEBI" id="CHEBI:46951"/>
        <dbReference type="ChEBI" id="CHEBI:66887"/>
        <dbReference type="EC" id="1.13.11.16"/>
    </reaction>
</comment>
<comment type="catalytic activity">
    <reaction>
        <text>(2E)-3-(2,3-dihydroxyphenyl)prop-2-enoate + O2 = (2Z,4E,7E)-2-hydroxy-6-oxonona-2,4,7-trienedioate + H(+)</text>
        <dbReference type="Rhea" id="RHEA:25054"/>
        <dbReference type="ChEBI" id="CHEBI:15378"/>
        <dbReference type="ChEBI" id="CHEBI:15379"/>
        <dbReference type="ChEBI" id="CHEBI:58642"/>
        <dbReference type="ChEBI" id="CHEBI:66888"/>
        <dbReference type="EC" id="1.13.11.16"/>
    </reaction>
</comment>
<comment type="cofactor">
    <cofactor evidence="1">
        <name>Fe(2+)</name>
        <dbReference type="ChEBI" id="CHEBI:29033"/>
    </cofactor>
</comment>
<comment type="biophysicochemical properties">
    <kinetics>
        <Vmax evidence="2">0.73 umol/min/mg enzyme with 3-(2,3-dihydroxyphenyl)propanoate (at pH 7.5)</Vmax>
        <Vmax evidence="2">0.45 umol/min/mg enzyme withd 2,3-dihydroxybiphenyl (at pH 7.5)</Vmax>
        <Vmax evidence="2">0.22 umol/min/mg enzyme withd 3-methylcatechol (at pH 7.5)</Vmax>
        <Vmax evidence="2">0.1 umol/min/mg enzyme withd catechol (at pH 7.5)</Vmax>
    </kinetics>
</comment>
<comment type="pathway">
    <text>Aromatic compound metabolism; 3-phenylpropanoate degradation.</text>
</comment>
<comment type="subunit">
    <text evidence="1">Homotetramer.</text>
</comment>
<comment type="similarity">
    <text evidence="3">Belongs to the LigB/MhpB extradiol dioxygenase family.</text>
</comment>
<sequence>MSGSAIATARRAFLGMSHSPLLGLNPVAADDQIAIDKAIAAARAAVHEFAPELIVLLGPDHYNGFFNELMPPFCIGSQATAVGDYLSPAGPLNVAGELAIALADHLMDRHFDIAVSRRMLVDHGFSQALQFLWGDEMDTPPVIPIFMNAVAQPGIARMARCKALGEGVGSFLDQLPLRTLLIGSGGLSHEPPVPTLAHPDPAVRERITVRSTPTEQERELKTERVKAAGLALAHGDSWMKPLNPEWDLQWMDAMASGQLDGLCAMNEASIGAMAGNSAHESKTWLVARSALPANTRLSCPVRAYRAIPSLIAGYGVMFMHH</sequence>
<dbReference type="EC" id="1.13.11.16"/>
<dbReference type="EMBL" id="AB024335">
    <property type="protein sequence ID" value="BAA82879.1"/>
    <property type="molecule type" value="Genomic_DNA"/>
</dbReference>
<dbReference type="RefSeq" id="WP_238707528.1">
    <property type="nucleotide sequence ID" value="NZ_BKBW01000001.1"/>
</dbReference>
<dbReference type="SMR" id="Q9S157"/>
<dbReference type="UniPathway" id="UPA00714"/>
<dbReference type="GO" id="GO:0047070">
    <property type="term" value="F:3-carboxyethylcatechol 2,3-dioxygenase activity"/>
    <property type="evidence" value="ECO:0007669"/>
    <property type="project" value="UniProtKB-UniRule"/>
</dbReference>
<dbReference type="GO" id="GO:0008198">
    <property type="term" value="F:ferrous iron binding"/>
    <property type="evidence" value="ECO:0007669"/>
    <property type="project" value="InterPro"/>
</dbReference>
<dbReference type="GO" id="GO:0019380">
    <property type="term" value="P:3-phenylpropionate catabolic process"/>
    <property type="evidence" value="ECO:0007669"/>
    <property type="project" value="UniProtKB-UniRule"/>
</dbReference>
<dbReference type="Gene3D" id="3.40.830.10">
    <property type="entry name" value="LigB-like"/>
    <property type="match status" value="1"/>
</dbReference>
<dbReference type="HAMAP" id="MF_01653">
    <property type="entry name" value="MhpB"/>
    <property type="match status" value="1"/>
</dbReference>
<dbReference type="InterPro" id="IPR023789">
    <property type="entry name" value="DHPP/DHXA_dioxygenase"/>
</dbReference>
<dbReference type="InterPro" id="IPR004183">
    <property type="entry name" value="Xdiol_dOase_suB"/>
</dbReference>
<dbReference type="NCBIfam" id="NF009910">
    <property type="entry name" value="PRK13370.1-4"/>
    <property type="match status" value="1"/>
</dbReference>
<dbReference type="Pfam" id="PF02900">
    <property type="entry name" value="LigB"/>
    <property type="match status" value="1"/>
</dbReference>
<dbReference type="SUPFAM" id="SSF53213">
    <property type="entry name" value="LigB-like"/>
    <property type="match status" value="1"/>
</dbReference>
<gene>
    <name type="primary">mhpB</name>
</gene>
<protein>
    <recommendedName>
        <fullName>2,3-dihydroxyphenylpropionate/2,3-dihydroxicinnamic acid 1,2-dioxygenase</fullName>
        <ecNumber>1.13.11.16</ecNumber>
    </recommendedName>
    <alternativeName>
        <fullName>3-carboxyethylcatechol 2,3-dioxygenase</fullName>
    </alternativeName>
</protein>
<organism>
    <name type="scientific">Comamonas testosteroni</name>
    <name type="common">Pseudomonas testosteroni</name>
    <dbReference type="NCBI Taxonomy" id="285"/>
    <lineage>
        <taxon>Bacteria</taxon>
        <taxon>Pseudomonadati</taxon>
        <taxon>Pseudomonadota</taxon>
        <taxon>Betaproteobacteria</taxon>
        <taxon>Burkholderiales</taxon>
        <taxon>Comamonadaceae</taxon>
        <taxon>Comamonas</taxon>
    </lineage>
</organism>
<name>MHPB_COMTE</name>
<keyword id="KW-0058">Aromatic hydrocarbons catabolism</keyword>
<keyword id="KW-0223">Dioxygenase</keyword>
<keyword id="KW-0408">Iron</keyword>
<keyword id="KW-0560">Oxidoreductase</keyword>
<reference key="1">
    <citation type="journal article" date="1999" name="Microbiology">
        <title>Genetic organization and characteristics of the 3-(3-hydroxyphenyl)propionic acid degradation pathway of Comamonas testosteroni TA441.</title>
        <authorList>
            <person name="Arai H."/>
            <person name="Yamamoto T."/>
            <person name="Ohishi T."/>
            <person name="Shimizu T."/>
            <person name="Nakata T."/>
            <person name="Kudo T."/>
        </authorList>
    </citation>
    <scope>NUCLEOTIDE SEQUENCE [GENOMIC DNA]</scope>
    <scope>FUNCTION IN CATABOLISM OF 3-HYDROXY DERIVATIVES OF PHENYLPROPIONIC ACID</scope>
    <scope>BIOPHYSICOCHEMICAL PROPERTIES</scope>
    <source>
        <strain>TA441</strain>
    </source>
</reference>
<proteinExistence type="evidence at protein level"/>
<feature type="chain" id="PRO_0000337647" description="2,3-dihydroxyphenylpropionate/2,3-dihydroxicinnamic acid 1,2-dioxygenase">
    <location>
        <begin position="1"/>
        <end position="321"/>
    </location>
</feature>
<feature type="active site" description="Proton donor" evidence="1">
    <location>
        <position position="123"/>
    </location>
</feature>
<feature type="active site" description="Proton acceptor" evidence="1">
    <location>
        <position position="189"/>
    </location>
</feature>